<name>AROK_PSEPF</name>
<protein>
    <recommendedName>
        <fullName evidence="1">Shikimate kinase</fullName>
        <shortName evidence="1">SK</shortName>
        <ecNumber evidence="1">2.7.1.71</ecNumber>
    </recommendedName>
</protein>
<evidence type="ECO:0000255" key="1">
    <source>
        <dbReference type="HAMAP-Rule" id="MF_00109"/>
    </source>
</evidence>
<gene>
    <name evidence="1" type="primary">aroK</name>
    <name type="ordered locus">Pfl01_0410</name>
</gene>
<organism>
    <name type="scientific">Pseudomonas fluorescens (strain Pf0-1)</name>
    <dbReference type="NCBI Taxonomy" id="205922"/>
    <lineage>
        <taxon>Bacteria</taxon>
        <taxon>Pseudomonadati</taxon>
        <taxon>Pseudomonadota</taxon>
        <taxon>Gammaproteobacteria</taxon>
        <taxon>Pseudomonadales</taxon>
        <taxon>Pseudomonadaceae</taxon>
        <taxon>Pseudomonas</taxon>
    </lineage>
</organism>
<reference key="1">
    <citation type="journal article" date="2009" name="Genome Biol.">
        <title>Genomic and genetic analyses of diversity and plant interactions of Pseudomonas fluorescens.</title>
        <authorList>
            <person name="Silby M.W."/>
            <person name="Cerdeno-Tarraga A.M."/>
            <person name="Vernikos G.S."/>
            <person name="Giddens S.R."/>
            <person name="Jackson R.W."/>
            <person name="Preston G.M."/>
            <person name="Zhang X.-X."/>
            <person name="Moon C.D."/>
            <person name="Gehrig S.M."/>
            <person name="Godfrey S.A.C."/>
            <person name="Knight C.G."/>
            <person name="Malone J.G."/>
            <person name="Robinson Z."/>
            <person name="Spiers A.J."/>
            <person name="Harris S."/>
            <person name="Challis G.L."/>
            <person name="Yaxley A.M."/>
            <person name="Harris D."/>
            <person name="Seeger K."/>
            <person name="Murphy L."/>
            <person name="Rutter S."/>
            <person name="Squares R."/>
            <person name="Quail M.A."/>
            <person name="Saunders E."/>
            <person name="Mavromatis K."/>
            <person name="Brettin T.S."/>
            <person name="Bentley S.D."/>
            <person name="Hothersall J."/>
            <person name="Stephens E."/>
            <person name="Thomas C.M."/>
            <person name="Parkhill J."/>
            <person name="Levy S.B."/>
            <person name="Rainey P.B."/>
            <person name="Thomson N.R."/>
        </authorList>
    </citation>
    <scope>NUCLEOTIDE SEQUENCE [LARGE SCALE GENOMIC DNA]</scope>
    <source>
        <strain>Pf0-1</strain>
    </source>
</reference>
<sequence length="172" mass="19274">MRNLILVGPMGAGKSTIGRLLAKELRLPFKDSDKEIELRTGANIPWIFDKEGEPGFRDREQAMIAELCAFDGVVLATGGGAVMRDANRKALHEGGRVVYLHASVEQQVGRTSRDRNRPLLRTANPEKTLRDLLAIRDPLYREIADLVVETDERPPRMVVLDILDRLAQLPPR</sequence>
<keyword id="KW-0028">Amino-acid biosynthesis</keyword>
<keyword id="KW-0057">Aromatic amino acid biosynthesis</keyword>
<keyword id="KW-0067">ATP-binding</keyword>
<keyword id="KW-0963">Cytoplasm</keyword>
<keyword id="KW-0418">Kinase</keyword>
<keyword id="KW-0460">Magnesium</keyword>
<keyword id="KW-0479">Metal-binding</keyword>
<keyword id="KW-0547">Nucleotide-binding</keyword>
<keyword id="KW-0808">Transferase</keyword>
<feature type="chain" id="PRO_0000237913" description="Shikimate kinase">
    <location>
        <begin position="1"/>
        <end position="172"/>
    </location>
</feature>
<feature type="binding site" evidence="1">
    <location>
        <begin position="11"/>
        <end position="16"/>
    </location>
    <ligand>
        <name>ATP</name>
        <dbReference type="ChEBI" id="CHEBI:30616"/>
    </ligand>
</feature>
<feature type="binding site" evidence="1">
    <location>
        <position position="15"/>
    </location>
    <ligand>
        <name>Mg(2+)</name>
        <dbReference type="ChEBI" id="CHEBI:18420"/>
    </ligand>
</feature>
<feature type="binding site" evidence="1">
    <location>
        <position position="33"/>
    </location>
    <ligand>
        <name>substrate</name>
    </ligand>
</feature>
<feature type="binding site" evidence="1">
    <location>
        <position position="57"/>
    </location>
    <ligand>
        <name>substrate</name>
    </ligand>
</feature>
<feature type="binding site" evidence="1">
    <location>
        <position position="79"/>
    </location>
    <ligand>
        <name>substrate</name>
    </ligand>
</feature>
<feature type="binding site" evidence="1">
    <location>
        <position position="117"/>
    </location>
    <ligand>
        <name>ATP</name>
        <dbReference type="ChEBI" id="CHEBI:30616"/>
    </ligand>
</feature>
<feature type="binding site" evidence="1">
    <location>
        <position position="136"/>
    </location>
    <ligand>
        <name>substrate</name>
    </ligand>
</feature>
<feature type="binding site" evidence="1">
    <location>
        <position position="153"/>
    </location>
    <ligand>
        <name>ATP</name>
        <dbReference type="ChEBI" id="CHEBI:30616"/>
    </ligand>
</feature>
<comment type="function">
    <text evidence="1">Catalyzes the specific phosphorylation of the 3-hydroxyl group of shikimic acid using ATP as a cosubstrate.</text>
</comment>
<comment type="catalytic activity">
    <reaction evidence="1">
        <text>shikimate + ATP = 3-phosphoshikimate + ADP + H(+)</text>
        <dbReference type="Rhea" id="RHEA:13121"/>
        <dbReference type="ChEBI" id="CHEBI:15378"/>
        <dbReference type="ChEBI" id="CHEBI:30616"/>
        <dbReference type="ChEBI" id="CHEBI:36208"/>
        <dbReference type="ChEBI" id="CHEBI:145989"/>
        <dbReference type="ChEBI" id="CHEBI:456216"/>
        <dbReference type="EC" id="2.7.1.71"/>
    </reaction>
</comment>
<comment type="cofactor">
    <cofactor evidence="1">
        <name>Mg(2+)</name>
        <dbReference type="ChEBI" id="CHEBI:18420"/>
    </cofactor>
    <text evidence="1">Binds 1 Mg(2+) ion per subunit.</text>
</comment>
<comment type="pathway">
    <text evidence="1">Metabolic intermediate biosynthesis; chorismate biosynthesis; chorismate from D-erythrose 4-phosphate and phosphoenolpyruvate: step 5/7.</text>
</comment>
<comment type="subunit">
    <text evidence="1">Monomer.</text>
</comment>
<comment type="subcellular location">
    <subcellularLocation>
        <location evidence="1">Cytoplasm</location>
    </subcellularLocation>
</comment>
<comment type="similarity">
    <text evidence="1">Belongs to the shikimate kinase family.</text>
</comment>
<proteinExistence type="inferred from homology"/>
<dbReference type="EC" id="2.7.1.71" evidence="1"/>
<dbReference type="EMBL" id="CP000094">
    <property type="protein sequence ID" value="ABA72154.1"/>
    <property type="molecule type" value="Genomic_DNA"/>
</dbReference>
<dbReference type="RefSeq" id="WP_011332081.1">
    <property type="nucleotide sequence ID" value="NC_007492.2"/>
</dbReference>
<dbReference type="SMR" id="Q3KJA2"/>
<dbReference type="KEGG" id="pfo:Pfl01_0410"/>
<dbReference type="eggNOG" id="COG0703">
    <property type="taxonomic scope" value="Bacteria"/>
</dbReference>
<dbReference type="HOGENOM" id="CLU_057607_2_2_6"/>
<dbReference type="UniPathway" id="UPA00053">
    <property type="reaction ID" value="UER00088"/>
</dbReference>
<dbReference type="Proteomes" id="UP000002704">
    <property type="component" value="Chromosome"/>
</dbReference>
<dbReference type="GO" id="GO:0005829">
    <property type="term" value="C:cytosol"/>
    <property type="evidence" value="ECO:0007669"/>
    <property type="project" value="TreeGrafter"/>
</dbReference>
<dbReference type="GO" id="GO:0005524">
    <property type="term" value="F:ATP binding"/>
    <property type="evidence" value="ECO:0007669"/>
    <property type="project" value="UniProtKB-UniRule"/>
</dbReference>
<dbReference type="GO" id="GO:0000287">
    <property type="term" value="F:magnesium ion binding"/>
    <property type="evidence" value="ECO:0007669"/>
    <property type="project" value="UniProtKB-UniRule"/>
</dbReference>
<dbReference type="GO" id="GO:0004765">
    <property type="term" value="F:shikimate kinase activity"/>
    <property type="evidence" value="ECO:0007669"/>
    <property type="project" value="UniProtKB-UniRule"/>
</dbReference>
<dbReference type="GO" id="GO:0008652">
    <property type="term" value="P:amino acid biosynthetic process"/>
    <property type="evidence" value="ECO:0007669"/>
    <property type="project" value="UniProtKB-KW"/>
</dbReference>
<dbReference type="GO" id="GO:0009073">
    <property type="term" value="P:aromatic amino acid family biosynthetic process"/>
    <property type="evidence" value="ECO:0007669"/>
    <property type="project" value="UniProtKB-KW"/>
</dbReference>
<dbReference type="GO" id="GO:0009423">
    <property type="term" value="P:chorismate biosynthetic process"/>
    <property type="evidence" value="ECO:0007669"/>
    <property type="project" value="UniProtKB-UniRule"/>
</dbReference>
<dbReference type="CDD" id="cd00464">
    <property type="entry name" value="SK"/>
    <property type="match status" value="1"/>
</dbReference>
<dbReference type="Gene3D" id="3.40.50.300">
    <property type="entry name" value="P-loop containing nucleotide triphosphate hydrolases"/>
    <property type="match status" value="1"/>
</dbReference>
<dbReference type="HAMAP" id="MF_00109">
    <property type="entry name" value="Shikimate_kinase"/>
    <property type="match status" value="1"/>
</dbReference>
<dbReference type="InterPro" id="IPR027417">
    <property type="entry name" value="P-loop_NTPase"/>
</dbReference>
<dbReference type="InterPro" id="IPR031322">
    <property type="entry name" value="Shikimate/glucono_kinase"/>
</dbReference>
<dbReference type="InterPro" id="IPR000623">
    <property type="entry name" value="Shikimate_kinase/TSH1"/>
</dbReference>
<dbReference type="InterPro" id="IPR023000">
    <property type="entry name" value="Shikimate_kinase_CS"/>
</dbReference>
<dbReference type="NCBIfam" id="NF003456">
    <property type="entry name" value="PRK05057.1"/>
    <property type="match status" value="1"/>
</dbReference>
<dbReference type="PANTHER" id="PTHR21087">
    <property type="entry name" value="SHIKIMATE KINASE"/>
    <property type="match status" value="1"/>
</dbReference>
<dbReference type="PANTHER" id="PTHR21087:SF16">
    <property type="entry name" value="SHIKIMATE KINASE 1, CHLOROPLASTIC"/>
    <property type="match status" value="1"/>
</dbReference>
<dbReference type="Pfam" id="PF01202">
    <property type="entry name" value="SKI"/>
    <property type="match status" value="1"/>
</dbReference>
<dbReference type="PRINTS" id="PR01100">
    <property type="entry name" value="SHIKIMTKNASE"/>
</dbReference>
<dbReference type="SUPFAM" id="SSF52540">
    <property type="entry name" value="P-loop containing nucleoside triphosphate hydrolases"/>
    <property type="match status" value="1"/>
</dbReference>
<dbReference type="PROSITE" id="PS01128">
    <property type="entry name" value="SHIKIMATE_KINASE"/>
    <property type="match status" value="1"/>
</dbReference>
<accession>Q3KJA2</accession>